<feature type="chain" id="PRO_1000193797" description="Large ribosomal subunit protein bL19">
    <location>
        <begin position="1"/>
        <end position="145"/>
    </location>
</feature>
<protein>
    <recommendedName>
        <fullName evidence="1">Large ribosomal subunit protein bL19</fullName>
    </recommendedName>
    <alternativeName>
        <fullName evidence="2">50S ribosomal protein L19</fullName>
    </alternativeName>
</protein>
<name>RL19_BRUA1</name>
<organism>
    <name type="scientific">Brucella abortus (strain S19)</name>
    <dbReference type="NCBI Taxonomy" id="430066"/>
    <lineage>
        <taxon>Bacteria</taxon>
        <taxon>Pseudomonadati</taxon>
        <taxon>Pseudomonadota</taxon>
        <taxon>Alphaproteobacteria</taxon>
        <taxon>Hyphomicrobiales</taxon>
        <taxon>Brucellaceae</taxon>
        <taxon>Brucella/Ochrobactrum group</taxon>
        <taxon>Brucella</taxon>
    </lineage>
</organism>
<accession>B2S861</accession>
<reference key="1">
    <citation type="journal article" date="2008" name="PLoS ONE">
        <title>Genome sequence of Brucella abortus vaccine strain S19 compared to virulent strains yields candidate virulence genes.</title>
        <authorList>
            <person name="Crasta O.R."/>
            <person name="Folkerts O."/>
            <person name="Fei Z."/>
            <person name="Mane S.P."/>
            <person name="Evans C."/>
            <person name="Martino-Catt S."/>
            <person name="Bricker B."/>
            <person name="Yu G."/>
            <person name="Du L."/>
            <person name="Sobral B.W."/>
        </authorList>
    </citation>
    <scope>NUCLEOTIDE SEQUENCE [LARGE SCALE GENOMIC DNA]</scope>
    <source>
        <strain>S19</strain>
    </source>
</reference>
<comment type="function">
    <text evidence="1">This protein is located at the 30S-50S ribosomal subunit interface and may play a role in the structure and function of the aminoacyl-tRNA binding site.</text>
</comment>
<comment type="similarity">
    <text evidence="1">Belongs to the bacterial ribosomal protein bL19 family.</text>
</comment>
<keyword id="KW-0687">Ribonucleoprotein</keyword>
<keyword id="KW-0689">Ribosomal protein</keyword>
<proteinExistence type="inferred from homology"/>
<sequence length="145" mass="16077">MTDIIRQLEAEQAAKIEEKRKLPDFQPGDTVRVQVRVTEGTRTRVQAYEGVCIARSGAGLNENFTVRKISYGEGVERVFPVYSPIVEGVEVVRRGKVRRAKLYYLRGLTGKAARIAEKKDNRTKAERAADKLAAAKAEAAKTAAE</sequence>
<evidence type="ECO:0000255" key="1">
    <source>
        <dbReference type="HAMAP-Rule" id="MF_00402"/>
    </source>
</evidence>
<evidence type="ECO:0000305" key="2"/>
<dbReference type="EMBL" id="CP000887">
    <property type="protein sequence ID" value="ACD73270.1"/>
    <property type="molecule type" value="Genomic_DNA"/>
</dbReference>
<dbReference type="RefSeq" id="WP_002964975.1">
    <property type="nucleotide sequence ID" value="NC_010742.1"/>
</dbReference>
<dbReference type="SMR" id="B2S861"/>
<dbReference type="GeneID" id="97534805"/>
<dbReference type="KEGG" id="bmc:BAbS19_I17880"/>
<dbReference type="HOGENOM" id="CLU_103507_0_2_5"/>
<dbReference type="Proteomes" id="UP000002565">
    <property type="component" value="Chromosome 1"/>
</dbReference>
<dbReference type="GO" id="GO:0022625">
    <property type="term" value="C:cytosolic large ribosomal subunit"/>
    <property type="evidence" value="ECO:0007669"/>
    <property type="project" value="TreeGrafter"/>
</dbReference>
<dbReference type="GO" id="GO:0003735">
    <property type="term" value="F:structural constituent of ribosome"/>
    <property type="evidence" value="ECO:0007669"/>
    <property type="project" value="InterPro"/>
</dbReference>
<dbReference type="GO" id="GO:0006412">
    <property type="term" value="P:translation"/>
    <property type="evidence" value="ECO:0007669"/>
    <property type="project" value="UniProtKB-UniRule"/>
</dbReference>
<dbReference type="FunFam" id="2.30.30.790:FF:000001">
    <property type="entry name" value="50S ribosomal protein L19"/>
    <property type="match status" value="1"/>
</dbReference>
<dbReference type="Gene3D" id="2.30.30.790">
    <property type="match status" value="1"/>
</dbReference>
<dbReference type="HAMAP" id="MF_00402">
    <property type="entry name" value="Ribosomal_bL19"/>
    <property type="match status" value="1"/>
</dbReference>
<dbReference type="InterPro" id="IPR001857">
    <property type="entry name" value="Ribosomal_bL19"/>
</dbReference>
<dbReference type="InterPro" id="IPR018257">
    <property type="entry name" value="Ribosomal_bL19_CS"/>
</dbReference>
<dbReference type="InterPro" id="IPR038657">
    <property type="entry name" value="Ribosomal_bL19_sf"/>
</dbReference>
<dbReference type="InterPro" id="IPR008991">
    <property type="entry name" value="Translation_prot_SH3-like_sf"/>
</dbReference>
<dbReference type="NCBIfam" id="TIGR01024">
    <property type="entry name" value="rplS_bact"/>
    <property type="match status" value="1"/>
</dbReference>
<dbReference type="PANTHER" id="PTHR15680:SF9">
    <property type="entry name" value="LARGE RIBOSOMAL SUBUNIT PROTEIN BL19M"/>
    <property type="match status" value="1"/>
</dbReference>
<dbReference type="PANTHER" id="PTHR15680">
    <property type="entry name" value="RIBOSOMAL PROTEIN L19"/>
    <property type="match status" value="1"/>
</dbReference>
<dbReference type="Pfam" id="PF01245">
    <property type="entry name" value="Ribosomal_L19"/>
    <property type="match status" value="1"/>
</dbReference>
<dbReference type="PIRSF" id="PIRSF002191">
    <property type="entry name" value="Ribosomal_L19"/>
    <property type="match status" value="1"/>
</dbReference>
<dbReference type="PRINTS" id="PR00061">
    <property type="entry name" value="RIBOSOMALL19"/>
</dbReference>
<dbReference type="SUPFAM" id="SSF50104">
    <property type="entry name" value="Translation proteins SH3-like domain"/>
    <property type="match status" value="1"/>
</dbReference>
<dbReference type="PROSITE" id="PS01015">
    <property type="entry name" value="RIBOSOMAL_L19"/>
    <property type="match status" value="1"/>
</dbReference>
<gene>
    <name evidence="1" type="primary">rplS</name>
    <name type="ordered locus">BAbS19_I17880</name>
</gene>